<proteinExistence type="inferred from homology"/>
<organism>
    <name type="scientific">Salmonella paratyphi A (strain ATCC 9150 / SARB42)</name>
    <dbReference type="NCBI Taxonomy" id="295319"/>
    <lineage>
        <taxon>Bacteria</taxon>
        <taxon>Pseudomonadati</taxon>
        <taxon>Pseudomonadota</taxon>
        <taxon>Gammaproteobacteria</taxon>
        <taxon>Enterobacterales</taxon>
        <taxon>Enterobacteriaceae</taxon>
        <taxon>Salmonella</taxon>
    </lineage>
</organism>
<dbReference type="EMBL" id="CP000026">
    <property type="protein sequence ID" value="AAV78095.1"/>
    <property type="molecule type" value="Genomic_DNA"/>
</dbReference>
<dbReference type="RefSeq" id="WP_000460169.1">
    <property type="nucleotide sequence ID" value="NC_006511.1"/>
</dbReference>
<dbReference type="SMR" id="Q5PCH2"/>
<dbReference type="KEGG" id="spt:SPA2208"/>
<dbReference type="HOGENOM" id="CLU_039613_35_1_6"/>
<dbReference type="Proteomes" id="UP000008185">
    <property type="component" value="Chromosome"/>
</dbReference>
<dbReference type="GO" id="GO:0003677">
    <property type="term" value="F:DNA binding"/>
    <property type="evidence" value="ECO:0007669"/>
    <property type="project" value="UniProtKB-KW"/>
</dbReference>
<dbReference type="GO" id="GO:0003700">
    <property type="term" value="F:DNA-binding transcription factor activity"/>
    <property type="evidence" value="ECO:0007669"/>
    <property type="project" value="InterPro"/>
</dbReference>
<dbReference type="FunFam" id="3.40.190.290:FF:000005">
    <property type="entry name" value="HTH-type transcriptional activator AllS"/>
    <property type="match status" value="1"/>
</dbReference>
<dbReference type="FunFam" id="1.10.10.10:FF:000001">
    <property type="entry name" value="LysR family transcriptional regulator"/>
    <property type="match status" value="1"/>
</dbReference>
<dbReference type="Gene3D" id="3.40.190.290">
    <property type="match status" value="1"/>
</dbReference>
<dbReference type="Gene3D" id="1.10.10.10">
    <property type="entry name" value="Winged helix-like DNA-binding domain superfamily/Winged helix DNA-binding domain"/>
    <property type="match status" value="1"/>
</dbReference>
<dbReference type="InterPro" id="IPR050176">
    <property type="entry name" value="LTTR"/>
</dbReference>
<dbReference type="InterPro" id="IPR005119">
    <property type="entry name" value="LysR_subst-bd"/>
</dbReference>
<dbReference type="InterPro" id="IPR000847">
    <property type="entry name" value="Tscrpt_reg_HTH_LysR"/>
</dbReference>
<dbReference type="InterPro" id="IPR036388">
    <property type="entry name" value="WH-like_DNA-bd_sf"/>
</dbReference>
<dbReference type="InterPro" id="IPR036390">
    <property type="entry name" value="WH_DNA-bd_sf"/>
</dbReference>
<dbReference type="NCBIfam" id="NF007501">
    <property type="entry name" value="PRK10094.1"/>
    <property type="match status" value="1"/>
</dbReference>
<dbReference type="PANTHER" id="PTHR30579:SF0">
    <property type="entry name" value="HTH-TYPE TRANSCRIPTIONAL ACTIVATOR ALLS"/>
    <property type="match status" value="1"/>
</dbReference>
<dbReference type="PANTHER" id="PTHR30579">
    <property type="entry name" value="TRANSCRIPTIONAL REGULATOR"/>
    <property type="match status" value="1"/>
</dbReference>
<dbReference type="Pfam" id="PF00126">
    <property type="entry name" value="HTH_1"/>
    <property type="match status" value="1"/>
</dbReference>
<dbReference type="Pfam" id="PF03466">
    <property type="entry name" value="LysR_substrate"/>
    <property type="match status" value="1"/>
</dbReference>
<dbReference type="SUPFAM" id="SSF53850">
    <property type="entry name" value="Periplasmic binding protein-like II"/>
    <property type="match status" value="1"/>
</dbReference>
<dbReference type="SUPFAM" id="SSF46785">
    <property type="entry name" value="Winged helix' DNA-binding domain"/>
    <property type="match status" value="1"/>
</dbReference>
<dbReference type="PROSITE" id="PS50931">
    <property type="entry name" value="HTH_LYSR"/>
    <property type="match status" value="1"/>
</dbReference>
<gene>
    <name type="primary">allS</name>
    <name type="ordered locus">SPA2208</name>
</gene>
<accession>Q5PCH2</accession>
<evidence type="ECO:0000250" key="1"/>
<evidence type="ECO:0000255" key="2">
    <source>
        <dbReference type="PROSITE-ProRule" id="PRU00253"/>
    </source>
</evidence>
<evidence type="ECO:0000305" key="3"/>
<keyword id="KW-0010">Activator</keyword>
<keyword id="KW-0238">DNA-binding</keyword>
<keyword id="KW-0804">Transcription</keyword>
<keyword id="KW-0805">Transcription regulation</keyword>
<feature type="chain" id="PRO_0000312812" description="HTH-type transcriptional activator AllS">
    <location>
        <begin position="1"/>
        <end position="308"/>
    </location>
</feature>
<feature type="domain" description="HTH lysR-type" evidence="2">
    <location>
        <begin position="2"/>
        <end position="59"/>
    </location>
</feature>
<feature type="DNA-binding region" description="H-T-H motif" evidence="2">
    <location>
        <begin position="19"/>
        <end position="38"/>
    </location>
</feature>
<name>ALLS_SALPA</name>
<protein>
    <recommendedName>
        <fullName>HTH-type transcriptional activator AllS</fullName>
    </recommendedName>
</protein>
<sequence>MFDPETLRTFISVAETGSFSKAAERLCKTTATISYRIKLLEENTGVGLFFRTTRSVSLTAAGSHLLSQAKDWLAWLDSMPDELRQVNDGVERQVNIVVNNLLYSPQAVASLLSWLNARYPFTQFHFSRQIYMGVWDSLLYEGFSLAIGVTGTEPLANTFMLDPLGSVQWRFVMSADHPLAHVSGPLTEAQLRRFPAINIEDSARTLTKRVAWRLPGQKEIIVPDMETKIAAHLAGVGIGFVPQPLCQTLIDKNELVSCTIPTMRPPSPLSLAWHKFGGGKAVEDIVKLFTQRQPEIAGFLSIFNTVRC</sequence>
<comment type="function">
    <text evidence="1">Positive regulator essential for the expression of allD operon. Binds to the allD promoter (By similarity).</text>
</comment>
<comment type="similarity">
    <text evidence="3">Belongs to the LysR transcriptional regulatory family.</text>
</comment>
<reference key="1">
    <citation type="journal article" date="2004" name="Nat. Genet.">
        <title>Comparison of genome degradation in Paratyphi A and Typhi, human-restricted serovars of Salmonella enterica that cause typhoid.</title>
        <authorList>
            <person name="McClelland M."/>
            <person name="Sanderson K.E."/>
            <person name="Clifton S.W."/>
            <person name="Latreille P."/>
            <person name="Porwollik S."/>
            <person name="Sabo A."/>
            <person name="Meyer R."/>
            <person name="Bieri T."/>
            <person name="Ozersky P."/>
            <person name="McLellan M."/>
            <person name="Harkins C.R."/>
            <person name="Wang C."/>
            <person name="Nguyen C."/>
            <person name="Berghoff A."/>
            <person name="Elliott G."/>
            <person name="Kohlberg S."/>
            <person name="Strong C."/>
            <person name="Du F."/>
            <person name="Carter J."/>
            <person name="Kremizki C."/>
            <person name="Layman D."/>
            <person name="Leonard S."/>
            <person name="Sun H."/>
            <person name="Fulton L."/>
            <person name="Nash W."/>
            <person name="Miner T."/>
            <person name="Minx P."/>
            <person name="Delehaunty K."/>
            <person name="Fronick C."/>
            <person name="Magrini V."/>
            <person name="Nhan M."/>
            <person name="Warren W."/>
            <person name="Florea L."/>
            <person name="Spieth J."/>
            <person name="Wilson R.K."/>
        </authorList>
    </citation>
    <scope>NUCLEOTIDE SEQUENCE [LARGE SCALE GENOMIC DNA]</scope>
    <source>
        <strain>ATCC 9150 / SARB42</strain>
    </source>
</reference>